<evidence type="ECO:0000255" key="1">
    <source>
        <dbReference type="HAMAP-Rule" id="MF_00111"/>
    </source>
</evidence>
<accession>P65457</accession>
<accession>Q99SD4</accession>
<comment type="function">
    <text evidence="1">Cell wall formation. Adds enolpyruvyl to UDP-N-acetylglucosamine.</text>
</comment>
<comment type="catalytic activity">
    <reaction evidence="1">
        <text>phosphoenolpyruvate + UDP-N-acetyl-alpha-D-glucosamine = UDP-N-acetyl-3-O-(1-carboxyvinyl)-alpha-D-glucosamine + phosphate</text>
        <dbReference type="Rhea" id="RHEA:18681"/>
        <dbReference type="ChEBI" id="CHEBI:43474"/>
        <dbReference type="ChEBI" id="CHEBI:57705"/>
        <dbReference type="ChEBI" id="CHEBI:58702"/>
        <dbReference type="ChEBI" id="CHEBI:68483"/>
        <dbReference type="EC" id="2.5.1.7"/>
    </reaction>
</comment>
<comment type="pathway">
    <text evidence="1">Cell wall biogenesis; peptidoglycan biosynthesis.</text>
</comment>
<comment type="subcellular location">
    <subcellularLocation>
        <location evidence="1">Cytoplasm</location>
    </subcellularLocation>
</comment>
<comment type="similarity">
    <text evidence="1">Belongs to the EPSP synthase family. MurA subfamily.</text>
</comment>
<keyword id="KW-0131">Cell cycle</keyword>
<keyword id="KW-0132">Cell division</keyword>
<keyword id="KW-0133">Cell shape</keyword>
<keyword id="KW-0961">Cell wall biogenesis/degradation</keyword>
<keyword id="KW-0963">Cytoplasm</keyword>
<keyword id="KW-0573">Peptidoglycan synthesis</keyword>
<keyword id="KW-0670">Pyruvate</keyword>
<keyword id="KW-0808">Transferase</keyword>
<gene>
    <name evidence="1" type="primary">murA2</name>
    <name type="synonym">murZ</name>
    <name type="ordered locus">SA1926</name>
</gene>
<proteinExistence type="evidence at protein level"/>
<dbReference type="EC" id="2.5.1.7" evidence="1"/>
<dbReference type="EMBL" id="BA000018">
    <property type="protein sequence ID" value="BAB43210.1"/>
    <property type="molecule type" value="Genomic_DNA"/>
</dbReference>
<dbReference type="PIR" id="A99906">
    <property type="entry name" value="A99906"/>
</dbReference>
<dbReference type="RefSeq" id="WP_000046602.1">
    <property type="nucleotide sequence ID" value="NC_002745.2"/>
</dbReference>
<dbReference type="SMR" id="P65457"/>
<dbReference type="EnsemblBacteria" id="BAB43210">
    <property type="protein sequence ID" value="BAB43210"/>
    <property type="gene ID" value="BAB43210"/>
</dbReference>
<dbReference type="KEGG" id="sau:SA1926"/>
<dbReference type="HOGENOM" id="CLU_027387_0_0_9"/>
<dbReference type="BioCyc" id="MetaCyc:MONOMER-15461"/>
<dbReference type="UniPathway" id="UPA00219"/>
<dbReference type="GO" id="GO:0005737">
    <property type="term" value="C:cytoplasm"/>
    <property type="evidence" value="ECO:0007669"/>
    <property type="project" value="UniProtKB-SubCell"/>
</dbReference>
<dbReference type="GO" id="GO:0008760">
    <property type="term" value="F:UDP-N-acetylglucosamine 1-carboxyvinyltransferase activity"/>
    <property type="evidence" value="ECO:0007669"/>
    <property type="project" value="UniProtKB-UniRule"/>
</dbReference>
<dbReference type="GO" id="GO:0051301">
    <property type="term" value="P:cell division"/>
    <property type="evidence" value="ECO:0007669"/>
    <property type="project" value="UniProtKB-KW"/>
</dbReference>
<dbReference type="GO" id="GO:0071555">
    <property type="term" value="P:cell wall organization"/>
    <property type="evidence" value="ECO:0007669"/>
    <property type="project" value="UniProtKB-KW"/>
</dbReference>
<dbReference type="GO" id="GO:0009252">
    <property type="term" value="P:peptidoglycan biosynthetic process"/>
    <property type="evidence" value="ECO:0007669"/>
    <property type="project" value="UniProtKB-UniRule"/>
</dbReference>
<dbReference type="GO" id="GO:0008360">
    <property type="term" value="P:regulation of cell shape"/>
    <property type="evidence" value="ECO:0007669"/>
    <property type="project" value="UniProtKB-KW"/>
</dbReference>
<dbReference type="GO" id="GO:0019277">
    <property type="term" value="P:UDP-N-acetylgalactosamine biosynthetic process"/>
    <property type="evidence" value="ECO:0007669"/>
    <property type="project" value="InterPro"/>
</dbReference>
<dbReference type="CDD" id="cd01555">
    <property type="entry name" value="UdpNAET"/>
    <property type="match status" value="1"/>
</dbReference>
<dbReference type="FunFam" id="3.65.10.10:FF:000001">
    <property type="entry name" value="UDP-N-acetylglucosamine 1-carboxyvinyltransferase"/>
    <property type="match status" value="1"/>
</dbReference>
<dbReference type="Gene3D" id="3.65.10.10">
    <property type="entry name" value="Enolpyruvate transferase domain"/>
    <property type="match status" value="2"/>
</dbReference>
<dbReference type="HAMAP" id="MF_00111">
    <property type="entry name" value="MurA"/>
    <property type="match status" value="1"/>
</dbReference>
<dbReference type="InterPro" id="IPR001986">
    <property type="entry name" value="Enolpyruvate_Tfrase_dom"/>
</dbReference>
<dbReference type="InterPro" id="IPR036968">
    <property type="entry name" value="Enolpyruvate_Tfrase_sf"/>
</dbReference>
<dbReference type="InterPro" id="IPR050068">
    <property type="entry name" value="MurA_subfamily"/>
</dbReference>
<dbReference type="InterPro" id="IPR013792">
    <property type="entry name" value="RNA3'P_cycl/enolpyr_Trfase_a/b"/>
</dbReference>
<dbReference type="InterPro" id="IPR005750">
    <property type="entry name" value="UDP_GlcNAc_COvinyl_MurA"/>
</dbReference>
<dbReference type="NCBIfam" id="TIGR01072">
    <property type="entry name" value="murA"/>
    <property type="match status" value="1"/>
</dbReference>
<dbReference type="NCBIfam" id="NF006873">
    <property type="entry name" value="PRK09369.1"/>
    <property type="match status" value="1"/>
</dbReference>
<dbReference type="NCBIfam" id="NF009470">
    <property type="entry name" value="PRK12830.1"/>
    <property type="match status" value="1"/>
</dbReference>
<dbReference type="PANTHER" id="PTHR43783">
    <property type="entry name" value="UDP-N-ACETYLGLUCOSAMINE 1-CARBOXYVINYLTRANSFERASE"/>
    <property type="match status" value="1"/>
</dbReference>
<dbReference type="PANTHER" id="PTHR43783:SF2">
    <property type="entry name" value="UDP-N-ACETYLGLUCOSAMINE 1-CARBOXYVINYLTRANSFERASE 2"/>
    <property type="match status" value="1"/>
</dbReference>
<dbReference type="Pfam" id="PF00275">
    <property type="entry name" value="EPSP_synthase"/>
    <property type="match status" value="1"/>
</dbReference>
<dbReference type="SUPFAM" id="SSF55205">
    <property type="entry name" value="EPT/RTPC-like"/>
    <property type="match status" value="1"/>
</dbReference>
<organism>
    <name type="scientific">Staphylococcus aureus (strain N315)</name>
    <dbReference type="NCBI Taxonomy" id="158879"/>
    <lineage>
        <taxon>Bacteria</taxon>
        <taxon>Bacillati</taxon>
        <taxon>Bacillota</taxon>
        <taxon>Bacilli</taxon>
        <taxon>Bacillales</taxon>
        <taxon>Staphylococcaceae</taxon>
        <taxon>Staphylococcus</taxon>
    </lineage>
</organism>
<reference key="1">
    <citation type="journal article" date="2001" name="Lancet">
        <title>Whole genome sequencing of meticillin-resistant Staphylococcus aureus.</title>
        <authorList>
            <person name="Kuroda M."/>
            <person name="Ohta T."/>
            <person name="Uchiyama I."/>
            <person name="Baba T."/>
            <person name="Yuzawa H."/>
            <person name="Kobayashi I."/>
            <person name="Cui L."/>
            <person name="Oguchi A."/>
            <person name="Aoki K."/>
            <person name="Nagai Y."/>
            <person name="Lian J.-Q."/>
            <person name="Ito T."/>
            <person name="Kanamori M."/>
            <person name="Matsumaru H."/>
            <person name="Maruyama A."/>
            <person name="Murakami H."/>
            <person name="Hosoyama A."/>
            <person name="Mizutani-Ui Y."/>
            <person name="Takahashi N.K."/>
            <person name="Sawano T."/>
            <person name="Inoue R."/>
            <person name="Kaito C."/>
            <person name="Sekimizu K."/>
            <person name="Hirakawa H."/>
            <person name="Kuhara S."/>
            <person name="Goto S."/>
            <person name="Yabuzaki J."/>
            <person name="Kanehisa M."/>
            <person name="Yamashita A."/>
            <person name="Oshima K."/>
            <person name="Furuya K."/>
            <person name="Yoshino C."/>
            <person name="Shiba T."/>
            <person name="Hattori M."/>
            <person name="Ogasawara N."/>
            <person name="Hayashi H."/>
            <person name="Hiramatsu K."/>
        </authorList>
    </citation>
    <scope>NUCLEOTIDE SEQUENCE [LARGE SCALE GENOMIC DNA]</scope>
    <source>
        <strain>N315</strain>
    </source>
</reference>
<reference key="2">
    <citation type="submission" date="2007-10" db="UniProtKB">
        <title>Shotgun proteomic analysis of total and membrane protein extracts of S. aureus strain N315.</title>
        <authorList>
            <person name="Vaezzadeh A.R."/>
            <person name="Deshusses J."/>
            <person name="Lescuyer P."/>
            <person name="Hochstrasser D.F."/>
        </authorList>
    </citation>
    <scope>IDENTIFICATION BY MASS SPECTROMETRY [LARGE SCALE ANALYSIS]</scope>
    <source>
        <strain>N315</strain>
    </source>
</reference>
<feature type="chain" id="PRO_0000178919" description="UDP-N-acetylglucosamine 1-carboxyvinyltransferase 2">
    <location>
        <begin position="1"/>
        <end position="419"/>
    </location>
</feature>
<feature type="active site" description="Proton donor" evidence="1">
    <location>
        <position position="118"/>
    </location>
</feature>
<feature type="binding site" evidence="1">
    <location>
        <begin position="24"/>
        <end position="25"/>
    </location>
    <ligand>
        <name>phosphoenolpyruvate</name>
        <dbReference type="ChEBI" id="CHEBI:58702"/>
    </ligand>
</feature>
<feature type="binding site" evidence="1">
    <location>
        <position position="94"/>
    </location>
    <ligand>
        <name>UDP-N-acetyl-alpha-D-glucosamine</name>
        <dbReference type="ChEBI" id="CHEBI:57705"/>
    </ligand>
</feature>
<feature type="binding site" evidence="1">
    <location>
        <begin position="123"/>
        <end position="127"/>
    </location>
    <ligand>
        <name>UDP-N-acetyl-alpha-D-glucosamine</name>
        <dbReference type="ChEBI" id="CHEBI:57705"/>
    </ligand>
</feature>
<feature type="binding site" evidence="1">
    <location>
        <position position="307"/>
    </location>
    <ligand>
        <name>UDP-N-acetyl-alpha-D-glucosamine</name>
        <dbReference type="ChEBI" id="CHEBI:57705"/>
    </ligand>
</feature>
<feature type="binding site" evidence="1">
    <location>
        <position position="329"/>
    </location>
    <ligand>
        <name>UDP-N-acetyl-alpha-D-glucosamine</name>
        <dbReference type="ChEBI" id="CHEBI:57705"/>
    </ligand>
</feature>
<feature type="modified residue" description="2-(S-cysteinyl)pyruvic acid O-phosphothioketal" evidence="1">
    <location>
        <position position="118"/>
    </location>
</feature>
<sequence>MAQEVIKIRGGRTLNGEVNISGAKNSAVAIIPATLLAQGHVKLEGLPQISDVKTLVSLLEDLNIKASLNGTELEVDTTEIQNAALPNNKVESLRASYYMMGAMLGRFKKCVIGLPGGCPLGPRPIDQHIKGFKALGAEIDESSTTSMKIEAKELKGAHIFLDMVSVGATINIMLAAVYATGQTVIENAAKEPEVVDVANFLTSMGANIKGAGTSTIKINGVKELHGSEYQVIPDRIEAGTYMCIAAACGENVILNNIVPKHVETLTAKFSELGVNVDVRDERIRINNNAPYQFVDIKTLVYPGFATDLQQPITPLLFMANGPSFVTDTIYPERFKHVEELKRMGANIEVDEGTATIKPSTLHGAEVYASDLRAGACLIIAGLIAEGVTTIYNVKHIYRGYTDIVEHLKALGADIWTETV</sequence>
<name>MURA2_STAAN</name>
<protein>
    <recommendedName>
        <fullName evidence="1">UDP-N-acetylglucosamine 1-carboxyvinyltransferase 2</fullName>
        <ecNumber evidence="1">2.5.1.7</ecNumber>
    </recommendedName>
    <alternativeName>
        <fullName evidence="1">Enoylpyruvate transferase 2</fullName>
    </alternativeName>
    <alternativeName>
        <fullName evidence="1">UDP-N-acetylglucosamine enolpyruvyl transferase 2</fullName>
        <shortName evidence="1">EPT 2</shortName>
    </alternativeName>
</protein>